<gene>
    <name evidence="1" type="primary">rplI</name>
    <name type="ordered locus">NFA_55750</name>
</gene>
<accession>Q5YN14</accession>
<keyword id="KW-1185">Reference proteome</keyword>
<keyword id="KW-0687">Ribonucleoprotein</keyword>
<keyword id="KW-0689">Ribosomal protein</keyword>
<keyword id="KW-0694">RNA-binding</keyword>
<keyword id="KW-0699">rRNA-binding</keyword>
<evidence type="ECO:0000255" key="1">
    <source>
        <dbReference type="HAMAP-Rule" id="MF_00503"/>
    </source>
</evidence>
<evidence type="ECO:0000305" key="2"/>
<proteinExistence type="inferred from homology"/>
<name>RL9_NOCFA</name>
<protein>
    <recommendedName>
        <fullName evidence="1">Large ribosomal subunit protein bL9</fullName>
    </recommendedName>
    <alternativeName>
        <fullName evidence="2">50S ribosomal protein L9</fullName>
    </alternativeName>
</protein>
<reference key="1">
    <citation type="journal article" date="2004" name="Proc. Natl. Acad. Sci. U.S.A.">
        <title>The complete genomic sequence of Nocardia farcinica IFM 10152.</title>
        <authorList>
            <person name="Ishikawa J."/>
            <person name="Yamashita A."/>
            <person name="Mikami Y."/>
            <person name="Hoshino Y."/>
            <person name="Kurita H."/>
            <person name="Hotta K."/>
            <person name="Shiba T."/>
            <person name="Hattori M."/>
        </authorList>
    </citation>
    <scope>NUCLEOTIDE SEQUENCE [LARGE SCALE GENOMIC DNA]</scope>
    <source>
        <strain>IFM 10152</strain>
    </source>
</reference>
<comment type="function">
    <text evidence="1">Binds to the 23S rRNA.</text>
</comment>
<comment type="similarity">
    <text evidence="1">Belongs to the bacterial ribosomal protein bL9 family.</text>
</comment>
<feature type="chain" id="PRO_0000236554" description="Large ribosomal subunit protein bL9">
    <location>
        <begin position="1"/>
        <end position="152"/>
    </location>
</feature>
<sequence>MKLILTADVDNLGAPGDTVEVKDGYGRNYLLPRGLAIVASRGAQKQVEGIRRAQEARRVRDLDHANELKQAIEGLSAVSLSVKTAGTGKLFGSVTQSDVAAAIKAAGGPVIDKRSIELPKSHIKSTGKHTIAVHLHPDVTAKFDLQVDAAAS</sequence>
<organism>
    <name type="scientific">Nocardia farcinica (strain IFM 10152)</name>
    <dbReference type="NCBI Taxonomy" id="247156"/>
    <lineage>
        <taxon>Bacteria</taxon>
        <taxon>Bacillati</taxon>
        <taxon>Actinomycetota</taxon>
        <taxon>Actinomycetes</taxon>
        <taxon>Mycobacteriales</taxon>
        <taxon>Nocardiaceae</taxon>
        <taxon>Nocardia</taxon>
    </lineage>
</organism>
<dbReference type="EMBL" id="AP006618">
    <property type="protein sequence ID" value="BAD60427.1"/>
    <property type="molecule type" value="Genomic_DNA"/>
</dbReference>
<dbReference type="RefSeq" id="WP_011212109.1">
    <property type="nucleotide sequence ID" value="NC_006361.1"/>
</dbReference>
<dbReference type="SMR" id="Q5YN14"/>
<dbReference type="STRING" id="247156.NFA_55750"/>
<dbReference type="GeneID" id="61136142"/>
<dbReference type="KEGG" id="nfa:NFA_55750"/>
<dbReference type="eggNOG" id="COG0359">
    <property type="taxonomic scope" value="Bacteria"/>
</dbReference>
<dbReference type="HOGENOM" id="CLU_078938_5_1_11"/>
<dbReference type="OrthoDB" id="9788336at2"/>
<dbReference type="Proteomes" id="UP000006820">
    <property type="component" value="Chromosome"/>
</dbReference>
<dbReference type="GO" id="GO:1990904">
    <property type="term" value="C:ribonucleoprotein complex"/>
    <property type="evidence" value="ECO:0007669"/>
    <property type="project" value="UniProtKB-KW"/>
</dbReference>
<dbReference type="GO" id="GO:0005840">
    <property type="term" value="C:ribosome"/>
    <property type="evidence" value="ECO:0007669"/>
    <property type="project" value="UniProtKB-KW"/>
</dbReference>
<dbReference type="GO" id="GO:0019843">
    <property type="term" value="F:rRNA binding"/>
    <property type="evidence" value="ECO:0007669"/>
    <property type="project" value="UniProtKB-UniRule"/>
</dbReference>
<dbReference type="GO" id="GO:0003735">
    <property type="term" value="F:structural constituent of ribosome"/>
    <property type="evidence" value="ECO:0007669"/>
    <property type="project" value="InterPro"/>
</dbReference>
<dbReference type="GO" id="GO:0006412">
    <property type="term" value="P:translation"/>
    <property type="evidence" value="ECO:0007669"/>
    <property type="project" value="UniProtKB-UniRule"/>
</dbReference>
<dbReference type="FunFam" id="3.40.5.10:FF:000003">
    <property type="entry name" value="50S ribosomal protein L9"/>
    <property type="match status" value="1"/>
</dbReference>
<dbReference type="Gene3D" id="3.10.430.100">
    <property type="entry name" value="Ribosomal protein L9, C-terminal domain"/>
    <property type="match status" value="1"/>
</dbReference>
<dbReference type="Gene3D" id="3.40.5.10">
    <property type="entry name" value="Ribosomal protein L9, N-terminal domain"/>
    <property type="match status" value="1"/>
</dbReference>
<dbReference type="HAMAP" id="MF_00503">
    <property type="entry name" value="Ribosomal_bL9"/>
    <property type="match status" value="1"/>
</dbReference>
<dbReference type="InterPro" id="IPR000244">
    <property type="entry name" value="Ribosomal_bL9"/>
</dbReference>
<dbReference type="InterPro" id="IPR009027">
    <property type="entry name" value="Ribosomal_bL9/RNase_H1_N"/>
</dbReference>
<dbReference type="InterPro" id="IPR020594">
    <property type="entry name" value="Ribosomal_bL9_bac/chp"/>
</dbReference>
<dbReference type="InterPro" id="IPR020069">
    <property type="entry name" value="Ribosomal_bL9_C"/>
</dbReference>
<dbReference type="InterPro" id="IPR036791">
    <property type="entry name" value="Ribosomal_bL9_C_sf"/>
</dbReference>
<dbReference type="InterPro" id="IPR020070">
    <property type="entry name" value="Ribosomal_bL9_N"/>
</dbReference>
<dbReference type="InterPro" id="IPR036935">
    <property type="entry name" value="Ribosomal_bL9_N_sf"/>
</dbReference>
<dbReference type="NCBIfam" id="TIGR00158">
    <property type="entry name" value="L9"/>
    <property type="match status" value="1"/>
</dbReference>
<dbReference type="PANTHER" id="PTHR21368">
    <property type="entry name" value="50S RIBOSOMAL PROTEIN L9"/>
    <property type="match status" value="1"/>
</dbReference>
<dbReference type="Pfam" id="PF03948">
    <property type="entry name" value="Ribosomal_L9_C"/>
    <property type="match status" value="1"/>
</dbReference>
<dbReference type="Pfam" id="PF01281">
    <property type="entry name" value="Ribosomal_L9_N"/>
    <property type="match status" value="1"/>
</dbReference>
<dbReference type="SUPFAM" id="SSF55658">
    <property type="entry name" value="L9 N-domain-like"/>
    <property type="match status" value="1"/>
</dbReference>
<dbReference type="SUPFAM" id="SSF55653">
    <property type="entry name" value="Ribosomal protein L9 C-domain"/>
    <property type="match status" value="1"/>
</dbReference>
<dbReference type="PROSITE" id="PS00651">
    <property type="entry name" value="RIBOSOMAL_L9"/>
    <property type="match status" value="1"/>
</dbReference>